<accession>A4JBR4</accession>
<sequence length="300" mass="32227">MKTGNQFNTVALVGRSNTPGIAEPLATLAGCIAKLGFDVVFEADTAREIGISGYPALTPAEIGARADVAVVLGGDGTMLGIGRQLAPYKTPLIGINHGRLGFITDIAAADMQALVPVILSGKFEREERSLLEARIVRNGEPIYHALAFNDVVVNRSGFSGMVELRASVDGRYMYNQRSDGLIVATPTGSTAYALSSAGPILHPQLQGVVLVPIAPHALSNRPIVLPDDSKIAIQIVAGRDVNVNFDMQSFTALELNDTIEVRRSKHTVPFLHPIGYSYYATLRKKLHWNEHASNEDDKAS</sequence>
<reference key="1">
    <citation type="submission" date="2007-03" db="EMBL/GenBank/DDBJ databases">
        <title>Complete sequence of chromosome 1 of Burkholderia vietnamiensis G4.</title>
        <authorList>
            <consortium name="US DOE Joint Genome Institute"/>
            <person name="Copeland A."/>
            <person name="Lucas S."/>
            <person name="Lapidus A."/>
            <person name="Barry K."/>
            <person name="Detter J.C."/>
            <person name="Glavina del Rio T."/>
            <person name="Hammon N."/>
            <person name="Israni S."/>
            <person name="Dalin E."/>
            <person name="Tice H."/>
            <person name="Pitluck S."/>
            <person name="Chain P."/>
            <person name="Malfatti S."/>
            <person name="Shin M."/>
            <person name="Vergez L."/>
            <person name="Schmutz J."/>
            <person name="Larimer F."/>
            <person name="Land M."/>
            <person name="Hauser L."/>
            <person name="Kyrpides N."/>
            <person name="Tiedje J."/>
            <person name="Richardson P."/>
        </authorList>
    </citation>
    <scope>NUCLEOTIDE SEQUENCE [LARGE SCALE GENOMIC DNA]</scope>
    <source>
        <strain>G4 / LMG 22486</strain>
    </source>
</reference>
<evidence type="ECO:0000255" key="1">
    <source>
        <dbReference type="HAMAP-Rule" id="MF_00361"/>
    </source>
</evidence>
<protein>
    <recommendedName>
        <fullName evidence="1">NAD kinase</fullName>
        <ecNumber evidence="1">2.7.1.23</ecNumber>
    </recommendedName>
    <alternativeName>
        <fullName evidence="1">ATP-dependent NAD kinase</fullName>
    </alternativeName>
</protein>
<feature type="chain" id="PRO_1000005396" description="NAD kinase">
    <location>
        <begin position="1"/>
        <end position="300"/>
    </location>
</feature>
<feature type="active site" description="Proton acceptor" evidence="1">
    <location>
        <position position="75"/>
    </location>
</feature>
<feature type="binding site" evidence="1">
    <location>
        <begin position="75"/>
        <end position="76"/>
    </location>
    <ligand>
        <name>NAD(+)</name>
        <dbReference type="ChEBI" id="CHEBI:57540"/>
    </ligand>
</feature>
<feature type="binding site" evidence="1">
    <location>
        <begin position="149"/>
        <end position="150"/>
    </location>
    <ligand>
        <name>NAD(+)</name>
        <dbReference type="ChEBI" id="CHEBI:57540"/>
    </ligand>
</feature>
<feature type="binding site" evidence="1">
    <location>
        <position position="177"/>
    </location>
    <ligand>
        <name>NAD(+)</name>
        <dbReference type="ChEBI" id="CHEBI:57540"/>
    </ligand>
</feature>
<feature type="binding site" evidence="1">
    <location>
        <position position="179"/>
    </location>
    <ligand>
        <name>NAD(+)</name>
        <dbReference type="ChEBI" id="CHEBI:57540"/>
    </ligand>
</feature>
<feature type="binding site" evidence="1">
    <location>
        <begin position="190"/>
        <end position="195"/>
    </location>
    <ligand>
        <name>NAD(+)</name>
        <dbReference type="ChEBI" id="CHEBI:57540"/>
    </ligand>
</feature>
<feature type="binding site" evidence="1">
    <location>
        <position position="214"/>
    </location>
    <ligand>
        <name>NAD(+)</name>
        <dbReference type="ChEBI" id="CHEBI:57540"/>
    </ligand>
</feature>
<feature type="binding site" evidence="1">
    <location>
        <position position="248"/>
    </location>
    <ligand>
        <name>NAD(+)</name>
        <dbReference type="ChEBI" id="CHEBI:57540"/>
    </ligand>
</feature>
<gene>
    <name evidence="1" type="primary">nadK</name>
    <name type="ordered locus">Bcep1808_0705</name>
</gene>
<organism>
    <name type="scientific">Burkholderia vietnamiensis (strain G4 / LMG 22486)</name>
    <name type="common">Burkholderia cepacia (strain R1808)</name>
    <dbReference type="NCBI Taxonomy" id="269482"/>
    <lineage>
        <taxon>Bacteria</taxon>
        <taxon>Pseudomonadati</taxon>
        <taxon>Pseudomonadota</taxon>
        <taxon>Betaproteobacteria</taxon>
        <taxon>Burkholderiales</taxon>
        <taxon>Burkholderiaceae</taxon>
        <taxon>Burkholderia</taxon>
        <taxon>Burkholderia cepacia complex</taxon>
    </lineage>
</organism>
<comment type="function">
    <text evidence="1">Involved in the regulation of the intracellular balance of NAD and NADP, and is a key enzyme in the biosynthesis of NADP. Catalyzes specifically the phosphorylation on 2'-hydroxyl of the adenosine moiety of NAD to yield NADP.</text>
</comment>
<comment type="catalytic activity">
    <reaction evidence="1">
        <text>NAD(+) + ATP = ADP + NADP(+) + H(+)</text>
        <dbReference type="Rhea" id="RHEA:18629"/>
        <dbReference type="ChEBI" id="CHEBI:15378"/>
        <dbReference type="ChEBI" id="CHEBI:30616"/>
        <dbReference type="ChEBI" id="CHEBI:57540"/>
        <dbReference type="ChEBI" id="CHEBI:58349"/>
        <dbReference type="ChEBI" id="CHEBI:456216"/>
        <dbReference type="EC" id="2.7.1.23"/>
    </reaction>
</comment>
<comment type="cofactor">
    <cofactor evidence="1">
        <name>a divalent metal cation</name>
        <dbReference type="ChEBI" id="CHEBI:60240"/>
    </cofactor>
</comment>
<comment type="subcellular location">
    <subcellularLocation>
        <location evidence="1">Cytoplasm</location>
    </subcellularLocation>
</comment>
<comment type="similarity">
    <text evidence="1">Belongs to the NAD kinase family.</text>
</comment>
<keyword id="KW-0067">ATP-binding</keyword>
<keyword id="KW-0963">Cytoplasm</keyword>
<keyword id="KW-0418">Kinase</keyword>
<keyword id="KW-0520">NAD</keyword>
<keyword id="KW-0521">NADP</keyword>
<keyword id="KW-0547">Nucleotide-binding</keyword>
<keyword id="KW-0808">Transferase</keyword>
<proteinExistence type="inferred from homology"/>
<dbReference type="EC" id="2.7.1.23" evidence="1"/>
<dbReference type="EMBL" id="CP000614">
    <property type="protein sequence ID" value="ABO53717.1"/>
    <property type="molecule type" value="Genomic_DNA"/>
</dbReference>
<dbReference type="SMR" id="A4JBR4"/>
<dbReference type="KEGG" id="bvi:Bcep1808_0705"/>
<dbReference type="eggNOG" id="COG0061">
    <property type="taxonomic scope" value="Bacteria"/>
</dbReference>
<dbReference type="HOGENOM" id="CLU_008831_0_1_4"/>
<dbReference type="Proteomes" id="UP000002287">
    <property type="component" value="Chromosome 1"/>
</dbReference>
<dbReference type="GO" id="GO:0005737">
    <property type="term" value="C:cytoplasm"/>
    <property type="evidence" value="ECO:0007669"/>
    <property type="project" value="UniProtKB-SubCell"/>
</dbReference>
<dbReference type="GO" id="GO:0005524">
    <property type="term" value="F:ATP binding"/>
    <property type="evidence" value="ECO:0007669"/>
    <property type="project" value="UniProtKB-KW"/>
</dbReference>
<dbReference type="GO" id="GO:0046872">
    <property type="term" value="F:metal ion binding"/>
    <property type="evidence" value="ECO:0007669"/>
    <property type="project" value="UniProtKB-UniRule"/>
</dbReference>
<dbReference type="GO" id="GO:0051287">
    <property type="term" value="F:NAD binding"/>
    <property type="evidence" value="ECO:0007669"/>
    <property type="project" value="UniProtKB-ARBA"/>
</dbReference>
<dbReference type="GO" id="GO:0003951">
    <property type="term" value="F:NAD+ kinase activity"/>
    <property type="evidence" value="ECO:0007669"/>
    <property type="project" value="UniProtKB-UniRule"/>
</dbReference>
<dbReference type="GO" id="GO:0019674">
    <property type="term" value="P:NAD metabolic process"/>
    <property type="evidence" value="ECO:0007669"/>
    <property type="project" value="InterPro"/>
</dbReference>
<dbReference type="GO" id="GO:0006741">
    <property type="term" value="P:NADP biosynthetic process"/>
    <property type="evidence" value="ECO:0007669"/>
    <property type="project" value="UniProtKB-UniRule"/>
</dbReference>
<dbReference type="Gene3D" id="3.40.50.10330">
    <property type="entry name" value="Probable inorganic polyphosphate/atp-NAD kinase, domain 1"/>
    <property type="match status" value="1"/>
</dbReference>
<dbReference type="Gene3D" id="2.60.200.30">
    <property type="entry name" value="Probable inorganic polyphosphate/atp-NAD kinase, domain 2"/>
    <property type="match status" value="1"/>
</dbReference>
<dbReference type="HAMAP" id="MF_00361">
    <property type="entry name" value="NAD_kinase"/>
    <property type="match status" value="1"/>
</dbReference>
<dbReference type="InterPro" id="IPR017438">
    <property type="entry name" value="ATP-NAD_kinase_N"/>
</dbReference>
<dbReference type="InterPro" id="IPR017437">
    <property type="entry name" value="ATP-NAD_kinase_PpnK-typ_C"/>
</dbReference>
<dbReference type="InterPro" id="IPR016064">
    <property type="entry name" value="NAD/diacylglycerol_kinase_sf"/>
</dbReference>
<dbReference type="InterPro" id="IPR002504">
    <property type="entry name" value="NADK"/>
</dbReference>
<dbReference type="NCBIfam" id="NF002561">
    <property type="entry name" value="PRK02155.1"/>
    <property type="match status" value="1"/>
</dbReference>
<dbReference type="PANTHER" id="PTHR20275">
    <property type="entry name" value="NAD KINASE"/>
    <property type="match status" value="1"/>
</dbReference>
<dbReference type="PANTHER" id="PTHR20275:SF0">
    <property type="entry name" value="NAD KINASE"/>
    <property type="match status" value="1"/>
</dbReference>
<dbReference type="Pfam" id="PF01513">
    <property type="entry name" value="NAD_kinase"/>
    <property type="match status" value="1"/>
</dbReference>
<dbReference type="Pfam" id="PF20143">
    <property type="entry name" value="NAD_kinase_C"/>
    <property type="match status" value="1"/>
</dbReference>
<dbReference type="SUPFAM" id="SSF111331">
    <property type="entry name" value="NAD kinase/diacylglycerol kinase-like"/>
    <property type="match status" value="1"/>
</dbReference>
<name>NADK_BURVG</name>